<organism>
    <name type="scientific">Sulfolobus acidocaldarius (strain ATCC 33909 / DSM 639 / JCM 8929 / NBRC 15157 / NCIMB 11770)</name>
    <dbReference type="NCBI Taxonomy" id="330779"/>
    <lineage>
        <taxon>Archaea</taxon>
        <taxon>Thermoproteota</taxon>
        <taxon>Thermoprotei</taxon>
        <taxon>Sulfolobales</taxon>
        <taxon>Sulfolobaceae</taxon>
        <taxon>Sulfolobus</taxon>
    </lineage>
</organism>
<accession>Q4J8I9</accession>
<protein>
    <recommendedName>
        <fullName evidence="1">Imidazole glycerol phosphate synthase subunit HisF</fullName>
        <ecNumber evidence="1">4.3.2.10</ecNumber>
    </recommendedName>
    <alternativeName>
        <fullName evidence="1">IGP synthase cyclase subunit</fullName>
    </alternativeName>
    <alternativeName>
        <fullName evidence="1">IGP synthase subunit HisF</fullName>
    </alternativeName>
    <alternativeName>
        <fullName evidence="1">ImGP synthase subunit HisF</fullName>
        <shortName evidence="1">IGPS subunit HisF</shortName>
    </alternativeName>
</protein>
<evidence type="ECO:0000255" key="1">
    <source>
        <dbReference type="HAMAP-Rule" id="MF_01013"/>
    </source>
</evidence>
<sequence length="249" mass="26607">MTSKRIIPCLDVKDGRVVKGVNFLNLVDKGDPVELAARYEEEGADEIVFLDITATIEGRKTMMNVVKDTASVISIPLTVGGGIRSLDDVSKILGNGADKVSINTAAVENKDLVSISSAEFGSQAIVVAIDVKRIGNDYYVFTRSGKYNTGINAISWAKEVEKLGAGEILLTSIDRDGTREGYDIEITELISKSVNIPIIASGGAGKIDDFLGILKVADAALAAGVFHDGVIRIMDLKKYLGKNGVEVRM</sequence>
<feature type="chain" id="PRO_0000142289" description="Imidazole glycerol phosphate synthase subunit HisF">
    <location>
        <begin position="1"/>
        <end position="249"/>
    </location>
</feature>
<feature type="active site" evidence="1">
    <location>
        <position position="11"/>
    </location>
</feature>
<feature type="active site" evidence="1">
    <location>
        <position position="130"/>
    </location>
</feature>
<keyword id="KW-0028">Amino-acid biosynthesis</keyword>
<keyword id="KW-0963">Cytoplasm</keyword>
<keyword id="KW-0368">Histidine biosynthesis</keyword>
<keyword id="KW-0456">Lyase</keyword>
<keyword id="KW-1185">Reference proteome</keyword>
<name>HIS6_SULAC</name>
<comment type="function">
    <text evidence="1">IGPS catalyzes the conversion of PRFAR and glutamine to IGP, AICAR and glutamate. The HisF subunit catalyzes the cyclization activity that produces IGP and AICAR from PRFAR using the ammonia provided by the HisH subunit.</text>
</comment>
<comment type="catalytic activity">
    <reaction evidence="1">
        <text>5-[(5-phospho-1-deoxy-D-ribulos-1-ylimino)methylamino]-1-(5-phospho-beta-D-ribosyl)imidazole-4-carboxamide + L-glutamine = D-erythro-1-(imidazol-4-yl)glycerol 3-phosphate + 5-amino-1-(5-phospho-beta-D-ribosyl)imidazole-4-carboxamide + L-glutamate + H(+)</text>
        <dbReference type="Rhea" id="RHEA:24793"/>
        <dbReference type="ChEBI" id="CHEBI:15378"/>
        <dbReference type="ChEBI" id="CHEBI:29985"/>
        <dbReference type="ChEBI" id="CHEBI:58278"/>
        <dbReference type="ChEBI" id="CHEBI:58359"/>
        <dbReference type="ChEBI" id="CHEBI:58475"/>
        <dbReference type="ChEBI" id="CHEBI:58525"/>
        <dbReference type="EC" id="4.3.2.10"/>
    </reaction>
</comment>
<comment type="pathway">
    <text evidence="1">Amino-acid biosynthesis; L-histidine biosynthesis; L-histidine from 5-phospho-alpha-D-ribose 1-diphosphate: step 5/9.</text>
</comment>
<comment type="subunit">
    <text evidence="1">Heterodimer of HisH and HisF.</text>
</comment>
<comment type="subcellular location">
    <subcellularLocation>
        <location evidence="1">Cytoplasm</location>
    </subcellularLocation>
</comment>
<comment type="similarity">
    <text evidence="1">Belongs to the HisA/HisF family.</text>
</comment>
<reference key="1">
    <citation type="journal article" date="2005" name="J. Bacteriol.">
        <title>The genome of Sulfolobus acidocaldarius, a model organism of the Crenarchaeota.</title>
        <authorList>
            <person name="Chen L."/>
            <person name="Bruegger K."/>
            <person name="Skovgaard M."/>
            <person name="Redder P."/>
            <person name="She Q."/>
            <person name="Torarinsson E."/>
            <person name="Greve B."/>
            <person name="Awayez M."/>
            <person name="Zibat A."/>
            <person name="Klenk H.-P."/>
            <person name="Garrett R.A."/>
        </authorList>
    </citation>
    <scope>NUCLEOTIDE SEQUENCE [LARGE SCALE GENOMIC DNA]</scope>
    <source>
        <strain>ATCC 33909 / DSM 639 / JCM 8929 / NBRC 15157 / NCIMB 11770</strain>
    </source>
</reference>
<proteinExistence type="inferred from homology"/>
<gene>
    <name evidence="1" type="primary">hisF</name>
    <name type="ordered locus">Saci_1578</name>
</gene>
<dbReference type="EC" id="4.3.2.10" evidence="1"/>
<dbReference type="EMBL" id="CP000077">
    <property type="protein sequence ID" value="AAY80891.1"/>
    <property type="molecule type" value="Genomic_DNA"/>
</dbReference>
<dbReference type="RefSeq" id="WP_011278393.1">
    <property type="nucleotide sequence ID" value="NC_007181.1"/>
</dbReference>
<dbReference type="SMR" id="Q4J8I9"/>
<dbReference type="STRING" id="330779.Saci_1578"/>
<dbReference type="GeneID" id="14552071"/>
<dbReference type="GeneID" id="78441921"/>
<dbReference type="KEGG" id="sai:Saci_1578"/>
<dbReference type="PATRIC" id="fig|330779.12.peg.1518"/>
<dbReference type="eggNOG" id="arCOG00617">
    <property type="taxonomic scope" value="Archaea"/>
</dbReference>
<dbReference type="HOGENOM" id="CLU_048577_4_0_2"/>
<dbReference type="UniPathway" id="UPA00031">
    <property type="reaction ID" value="UER00010"/>
</dbReference>
<dbReference type="Proteomes" id="UP000001018">
    <property type="component" value="Chromosome"/>
</dbReference>
<dbReference type="GO" id="GO:0005737">
    <property type="term" value="C:cytoplasm"/>
    <property type="evidence" value="ECO:0007669"/>
    <property type="project" value="UniProtKB-SubCell"/>
</dbReference>
<dbReference type="GO" id="GO:0000107">
    <property type="term" value="F:imidazoleglycerol-phosphate synthase activity"/>
    <property type="evidence" value="ECO:0007669"/>
    <property type="project" value="UniProtKB-UniRule"/>
</dbReference>
<dbReference type="GO" id="GO:0016829">
    <property type="term" value="F:lyase activity"/>
    <property type="evidence" value="ECO:0007669"/>
    <property type="project" value="UniProtKB-KW"/>
</dbReference>
<dbReference type="GO" id="GO:0000105">
    <property type="term" value="P:L-histidine biosynthetic process"/>
    <property type="evidence" value="ECO:0007669"/>
    <property type="project" value="UniProtKB-UniRule"/>
</dbReference>
<dbReference type="CDD" id="cd04731">
    <property type="entry name" value="HisF"/>
    <property type="match status" value="1"/>
</dbReference>
<dbReference type="FunFam" id="3.20.20.70:FF:000006">
    <property type="entry name" value="Imidazole glycerol phosphate synthase subunit HisF"/>
    <property type="match status" value="1"/>
</dbReference>
<dbReference type="Gene3D" id="3.20.20.70">
    <property type="entry name" value="Aldolase class I"/>
    <property type="match status" value="1"/>
</dbReference>
<dbReference type="HAMAP" id="MF_01013">
    <property type="entry name" value="HisF"/>
    <property type="match status" value="1"/>
</dbReference>
<dbReference type="InterPro" id="IPR013785">
    <property type="entry name" value="Aldolase_TIM"/>
</dbReference>
<dbReference type="InterPro" id="IPR006062">
    <property type="entry name" value="His_biosynth"/>
</dbReference>
<dbReference type="InterPro" id="IPR004651">
    <property type="entry name" value="HisF"/>
</dbReference>
<dbReference type="InterPro" id="IPR050064">
    <property type="entry name" value="IGPS_HisA/HisF"/>
</dbReference>
<dbReference type="InterPro" id="IPR011060">
    <property type="entry name" value="RibuloseP-bd_barrel"/>
</dbReference>
<dbReference type="NCBIfam" id="TIGR00735">
    <property type="entry name" value="hisF"/>
    <property type="match status" value="1"/>
</dbReference>
<dbReference type="PANTHER" id="PTHR21235:SF2">
    <property type="entry name" value="IMIDAZOLE GLYCEROL PHOSPHATE SYNTHASE HISHF"/>
    <property type="match status" value="1"/>
</dbReference>
<dbReference type="PANTHER" id="PTHR21235">
    <property type="entry name" value="IMIDAZOLE GLYCEROL PHOSPHATE SYNTHASE SUBUNIT HISF/H IGP SYNTHASE SUBUNIT HISF/H"/>
    <property type="match status" value="1"/>
</dbReference>
<dbReference type="Pfam" id="PF00977">
    <property type="entry name" value="His_biosynth"/>
    <property type="match status" value="1"/>
</dbReference>
<dbReference type="SUPFAM" id="SSF51366">
    <property type="entry name" value="Ribulose-phoshate binding barrel"/>
    <property type="match status" value="1"/>
</dbReference>